<protein>
    <recommendedName>
        <fullName>Protease 4</fullName>
        <ecNumber>3.4.21.-</ecNumber>
    </recommendedName>
    <alternativeName>
        <fullName>Endopeptidase IV</fullName>
    </alternativeName>
    <alternativeName>
        <fullName>Protease IV</fullName>
    </alternativeName>
    <alternativeName>
        <fullName>Signal peptide peptidase</fullName>
    </alternativeName>
</protein>
<evidence type="ECO:0000250" key="1"/>
<evidence type="ECO:0000255" key="2"/>
<evidence type="ECO:0000305" key="3"/>
<dbReference type="EC" id="3.4.21.-"/>
<dbReference type="EMBL" id="AL513382">
    <property type="protein sequence ID" value="CAD02059.1"/>
    <property type="molecule type" value="Genomic_DNA"/>
</dbReference>
<dbReference type="EMBL" id="AE014613">
    <property type="protein sequence ID" value="AAO68831.1"/>
    <property type="molecule type" value="Genomic_DNA"/>
</dbReference>
<dbReference type="RefSeq" id="NP_456217.1">
    <property type="nucleotide sequence ID" value="NC_003198.1"/>
</dbReference>
<dbReference type="RefSeq" id="WP_001259874.1">
    <property type="nucleotide sequence ID" value="NZ_WSUR01000034.1"/>
</dbReference>
<dbReference type="SMR" id="Q8Z6F3"/>
<dbReference type="STRING" id="220341.gene:17585751"/>
<dbReference type="KEGG" id="stt:t1174"/>
<dbReference type="KEGG" id="sty:STY1819"/>
<dbReference type="PATRIC" id="fig|220341.7.peg.1832"/>
<dbReference type="eggNOG" id="COG0616">
    <property type="taxonomic scope" value="Bacteria"/>
</dbReference>
<dbReference type="HOGENOM" id="CLU_008856_1_1_6"/>
<dbReference type="OMA" id="KGQYLYC"/>
<dbReference type="OrthoDB" id="9764363at2"/>
<dbReference type="Proteomes" id="UP000000541">
    <property type="component" value="Chromosome"/>
</dbReference>
<dbReference type="Proteomes" id="UP000002670">
    <property type="component" value="Chromosome"/>
</dbReference>
<dbReference type="GO" id="GO:0005886">
    <property type="term" value="C:plasma membrane"/>
    <property type="evidence" value="ECO:0007669"/>
    <property type="project" value="UniProtKB-SubCell"/>
</dbReference>
<dbReference type="GO" id="GO:0008236">
    <property type="term" value="F:serine-type peptidase activity"/>
    <property type="evidence" value="ECO:0007669"/>
    <property type="project" value="UniProtKB-KW"/>
</dbReference>
<dbReference type="GO" id="GO:0006465">
    <property type="term" value="P:signal peptide processing"/>
    <property type="evidence" value="ECO:0007669"/>
    <property type="project" value="InterPro"/>
</dbReference>
<dbReference type="CDD" id="cd07019">
    <property type="entry name" value="S49_SppA_1"/>
    <property type="match status" value="1"/>
</dbReference>
<dbReference type="CDD" id="cd07018">
    <property type="entry name" value="S49_SppA_67K_type"/>
    <property type="match status" value="1"/>
</dbReference>
<dbReference type="FunFam" id="3.90.226.10:FF:000033">
    <property type="entry name" value="Protease 4"/>
    <property type="match status" value="1"/>
</dbReference>
<dbReference type="FunFam" id="3.90.226.10:FF:000051">
    <property type="entry name" value="Protease 4"/>
    <property type="match status" value="1"/>
</dbReference>
<dbReference type="Gene3D" id="6.20.330.10">
    <property type="match status" value="1"/>
</dbReference>
<dbReference type="Gene3D" id="3.90.226.10">
    <property type="entry name" value="2-enoyl-CoA Hydratase, Chain A, domain 1"/>
    <property type="match status" value="3"/>
</dbReference>
<dbReference type="InterPro" id="IPR029045">
    <property type="entry name" value="ClpP/crotonase-like_dom_sf"/>
</dbReference>
<dbReference type="InterPro" id="IPR004634">
    <property type="entry name" value="Pept_S49_pIV"/>
</dbReference>
<dbReference type="InterPro" id="IPR004635">
    <property type="entry name" value="Pept_S49_SppA"/>
</dbReference>
<dbReference type="InterPro" id="IPR002142">
    <property type="entry name" value="Peptidase_S49"/>
</dbReference>
<dbReference type="InterPro" id="IPR033854">
    <property type="entry name" value="S49_SppA_1"/>
</dbReference>
<dbReference type="InterPro" id="IPR047217">
    <property type="entry name" value="S49_SppA_67K_type_N"/>
</dbReference>
<dbReference type="NCBIfam" id="NF008195">
    <property type="entry name" value="PRK10949.1"/>
    <property type="match status" value="1"/>
</dbReference>
<dbReference type="NCBIfam" id="TIGR00705">
    <property type="entry name" value="SppA_67K"/>
    <property type="match status" value="1"/>
</dbReference>
<dbReference type="NCBIfam" id="TIGR00706">
    <property type="entry name" value="SppA_dom"/>
    <property type="match status" value="1"/>
</dbReference>
<dbReference type="PANTHER" id="PTHR33209:SF1">
    <property type="entry name" value="PEPTIDASE S49 DOMAIN-CONTAINING PROTEIN"/>
    <property type="match status" value="1"/>
</dbReference>
<dbReference type="PANTHER" id="PTHR33209">
    <property type="entry name" value="PROTEASE 4"/>
    <property type="match status" value="1"/>
</dbReference>
<dbReference type="Pfam" id="PF01343">
    <property type="entry name" value="Peptidase_S49"/>
    <property type="match status" value="2"/>
</dbReference>
<dbReference type="PIRSF" id="PIRSF001217">
    <property type="entry name" value="Protease_4_SppA"/>
    <property type="match status" value="1"/>
</dbReference>
<dbReference type="SUPFAM" id="SSF52096">
    <property type="entry name" value="ClpP/crotonase"/>
    <property type="match status" value="2"/>
</dbReference>
<keyword id="KW-0997">Cell inner membrane</keyword>
<keyword id="KW-1003">Cell membrane</keyword>
<keyword id="KW-0378">Hydrolase</keyword>
<keyword id="KW-0472">Membrane</keyword>
<keyword id="KW-0645">Protease</keyword>
<keyword id="KW-0720">Serine protease</keyword>
<keyword id="KW-0812">Transmembrane</keyword>
<keyword id="KW-1133">Transmembrane helix</keyword>
<comment type="function">
    <text evidence="1">Digests cleaved signal peptides in vitro, its in vivo function is unknown. This activity is necessary to maintain proper secretion of mature proteins across the membrane (By similarity).</text>
</comment>
<comment type="subunit">
    <text evidence="1">Homotetramer.</text>
</comment>
<comment type="subcellular location">
    <subcellularLocation>
        <location evidence="1">Cell inner membrane</location>
        <topology evidence="1">Single-pass membrane protein</topology>
    </subcellularLocation>
</comment>
<comment type="similarity">
    <text evidence="3">Belongs to the peptidase S49 family.</text>
</comment>
<proteinExistence type="inferred from homology"/>
<gene>
    <name type="primary">sppA</name>
    <name type="ordered locus">STY1819</name>
    <name type="ordered locus">t1174</name>
</gene>
<name>SPPA_SALTI</name>
<feature type="chain" id="PRO_0000394511" description="Protease 4">
    <location>
        <begin position="1"/>
        <end position="618"/>
    </location>
</feature>
<feature type="topological domain" description="Cytoplasmic" evidence="2">
    <location>
        <begin position="1"/>
        <end position="24"/>
    </location>
</feature>
<feature type="transmembrane region" description="Helical" evidence="2">
    <location>
        <begin position="25"/>
        <end position="45"/>
    </location>
</feature>
<feature type="topological domain" description="Periplasmic" evidence="2">
    <location>
        <begin position="46"/>
        <end position="618"/>
    </location>
</feature>
<feature type="active site" description="Proton donor/acceptor" evidence="1">
    <location>
        <position position="209"/>
    </location>
</feature>
<feature type="active site" description="Nucleophile" evidence="1">
    <location>
        <position position="409"/>
    </location>
</feature>
<reference key="1">
    <citation type="journal article" date="2001" name="Nature">
        <title>Complete genome sequence of a multiple drug resistant Salmonella enterica serovar Typhi CT18.</title>
        <authorList>
            <person name="Parkhill J."/>
            <person name="Dougan G."/>
            <person name="James K.D."/>
            <person name="Thomson N.R."/>
            <person name="Pickard D."/>
            <person name="Wain J."/>
            <person name="Churcher C.M."/>
            <person name="Mungall K.L."/>
            <person name="Bentley S.D."/>
            <person name="Holden M.T.G."/>
            <person name="Sebaihia M."/>
            <person name="Baker S."/>
            <person name="Basham D."/>
            <person name="Brooks K."/>
            <person name="Chillingworth T."/>
            <person name="Connerton P."/>
            <person name="Cronin A."/>
            <person name="Davis P."/>
            <person name="Davies R.M."/>
            <person name="Dowd L."/>
            <person name="White N."/>
            <person name="Farrar J."/>
            <person name="Feltwell T."/>
            <person name="Hamlin N."/>
            <person name="Haque A."/>
            <person name="Hien T.T."/>
            <person name="Holroyd S."/>
            <person name="Jagels K."/>
            <person name="Krogh A."/>
            <person name="Larsen T.S."/>
            <person name="Leather S."/>
            <person name="Moule S."/>
            <person name="O'Gaora P."/>
            <person name="Parry C."/>
            <person name="Quail M.A."/>
            <person name="Rutherford K.M."/>
            <person name="Simmonds M."/>
            <person name="Skelton J."/>
            <person name="Stevens K."/>
            <person name="Whitehead S."/>
            <person name="Barrell B.G."/>
        </authorList>
    </citation>
    <scope>NUCLEOTIDE SEQUENCE [LARGE SCALE GENOMIC DNA]</scope>
    <source>
        <strain>CT18</strain>
    </source>
</reference>
<reference key="2">
    <citation type="journal article" date="2003" name="J. Bacteriol.">
        <title>Comparative genomics of Salmonella enterica serovar Typhi strains Ty2 and CT18.</title>
        <authorList>
            <person name="Deng W."/>
            <person name="Liou S.-R."/>
            <person name="Plunkett G. III"/>
            <person name="Mayhew G.F."/>
            <person name="Rose D.J."/>
            <person name="Burland V."/>
            <person name="Kodoyianni V."/>
            <person name="Schwartz D.C."/>
            <person name="Blattner F.R."/>
        </authorList>
    </citation>
    <scope>NUCLEOTIDE SEQUENCE [LARGE SCALE GENOMIC DNA]</scope>
    <source>
        <strain>ATCC 700931 / Ty2</strain>
    </source>
</reference>
<accession>Q8Z6F3</accession>
<accession>Q7CA98</accession>
<sequence length="618" mass="67189">MRTLWRFIAGFFKWTWRVLNFVREMVLNLFFIFLVLVGVGIWMQIGNGSNSEQTARGALLLDISGVIVDKPSTNHRLGALGRQLFGASSDRLQENSLFDIVNAIRQAKDDRNITGIVLDLKNFTGADQPSMRYIGKALREFRDSGKPVFAVGENYSQGQYYLASFANKIWLSPQGQVDLHGFATNGLYYKTLLDKLKVSTHVFRVGTYKSAVEPFIRDDMSPAAREADSRWIGELWQNYLHTVSANRQISPQQLFPGAQAIIDGLTSVGGDTAKYALDHKLVDALASSADVEKALTKQFGWSKTENNYRAISYYDYSLKTPADTGGTIAVIFANGAIMDGEETPGNVGGDTTASQIRDARLDPKVKAIVLRVNSPGGSVNASEVIRAELAAARAAGKPVVVSMGGMAASGGYWISTPANYIVASPSTLTGSIGIFGVINTVENSLSSIGVHSDGVSTSPLADISMTKALSPEVQQMMQLSIEYGYKRFITLVADARKRTPEQIDKIAQGHVWTGEDAKANGLVDSLGDFDDAVAKAAELAKLKQWHLDYYQDEPTVLDMVMDSMTGSVRAMLPEAIQAMLPAPLVSAANTVKAEGDKLAAFNDPQNRYAFCLTCANVR</sequence>
<organism>
    <name type="scientific">Salmonella typhi</name>
    <dbReference type="NCBI Taxonomy" id="90370"/>
    <lineage>
        <taxon>Bacteria</taxon>
        <taxon>Pseudomonadati</taxon>
        <taxon>Pseudomonadota</taxon>
        <taxon>Gammaproteobacteria</taxon>
        <taxon>Enterobacterales</taxon>
        <taxon>Enterobacteriaceae</taxon>
        <taxon>Salmonella</taxon>
    </lineage>
</organism>